<protein>
    <recommendedName>
        <fullName>Formin-like protein 1</fullName>
    </recommendedName>
    <alternativeName>
        <fullName>CLL-associated antigen KW-13</fullName>
    </alternativeName>
    <alternativeName>
        <fullName>Leukocyte formin</fullName>
    </alternativeName>
</protein>
<dbReference type="EMBL" id="AY278319">
    <property type="protein sequence ID" value="AAP32476.1"/>
    <property type="molecule type" value="mRNA"/>
</dbReference>
<dbReference type="EMBL" id="AC008105">
    <property type="status" value="NOT_ANNOTATED_CDS"/>
    <property type="molecule type" value="mRNA"/>
</dbReference>
<dbReference type="EMBL" id="AF432213">
    <property type="protein sequence ID" value="AAL99920.1"/>
    <property type="molecule type" value="mRNA"/>
</dbReference>
<dbReference type="EMBL" id="BC001710">
    <property type="protein sequence ID" value="AAH01710.2"/>
    <property type="molecule type" value="mRNA"/>
</dbReference>
<dbReference type="EMBL" id="BC009000">
    <property type="protein sequence ID" value="AAH09000.2"/>
    <property type="molecule type" value="mRNA"/>
</dbReference>
<dbReference type="EMBL" id="BC021906">
    <property type="protein sequence ID" value="AAH21906.1"/>
    <property type="status" value="ALT_INIT"/>
    <property type="molecule type" value="mRNA"/>
</dbReference>
<dbReference type="EMBL" id="BC073988">
    <property type="protein sequence ID" value="AAH73988.1"/>
    <property type="molecule type" value="mRNA"/>
</dbReference>
<dbReference type="EMBL" id="AJ008112">
    <property type="protein sequence ID" value="CAA07870.1"/>
    <property type="status" value="ALT_INIT"/>
    <property type="molecule type" value="mRNA"/>
</dbReference>
<dbReference type="EMBL" id="CR456759">
    <property type="protein sequence ID" value="CAG33040.1"/>
    <property type="molecule type" value="mRNA"/>
</dbReference>
<dbReference type="EMBL" id="FJ534522">
    <property type="protein sequence ID" value="ACR19333.1"/>
    <property type="molecule type" value="mRNA"/>
</dbReference>
<dbReference type="CCDS" id="CCDS11497.1">
    <molecule id="O95466-1"/>
</dbReference>
<dbReference type="CCDS" id="CCDS92339.1">
    <molecule id="O95466-2"/>
</dbReference>
<dbReference type="RefSeq" id="NP_001398057.1">
    <molecule id="O95466-2"/>
    <property type="nucleotide sequence ID" value="NM_001411128.1"/>
</dbReference>
<dbReference type="RefSeq" id="NP_005883.2">
    <molecule id="O95466-1"/>
    <property type="nucleotide sequence ID" value="NM_005892.3"/>
</dbReference>
<dbReference type="RefSeq" id="XP_006722126.1">
    <property type="nucleotide sequence ID" value="XM_006722063.3"/>
</dbReference>
<dbReference type="RefSeq" id="XP_006722133.1">
    <property type="nucleotide sequence ID" value="XM_006722070.3"/>
</dbReference>
<dbReference type="PDB" id="4YDH">
    <property type="method" value="X-ray"/>
    <property type="resolution" value="3.80 A"/>
    <property type="chains" value="A/C=1-458"/>
</dbReference>
<dbReference type="PDBsum" id="4YDH"/>
<dbReference type="SMR" id="O95466"/>
<dbReference type="BioGRID" id="107208">
    <property type="interactions" value="101"/>
</dbReference>
<dbReference type="FunCoup" id="O95466">
    <property type="interactions" value="981"/>
</dbReference>
<dbReference type="IntAct" id="O95466">
    <property type="interactions" value="21"/>
</dbReference>
<dbReference type="MINT" id="O95466"/>
<dbReference type="STRING" id="9606.ENSP00000329219"/>
<dbReference type="GlyGen" id="O95466">
    <property type="glycosylation" value="3 sites, 1 O-linked glycan (1 site)"/>
</dbReference>
<dbReference type="iPTMnet" id="O95466"/>
<dbReference type="MetOSite" id="O95466"/>
<dbReference type="PhosphoSitePlus" id="O95466"/>
<dbReference type="SwissPalm" id="O95466"/>
<dbReference type="BioMuta" id="FMNL1"/>
<dbReference type="jPOST" id="O95466"/>
<dbReference type="MassIVE" id="O95466"/>
<dbReference type="PaxDb" id="9606-ENSP00000329219"/>
<dbReference type="PeptideAtlas" id="O95466"/>
<dbReference type="ProteomicsDB" id="50898">
    <molecule id="O95466-1"/>
</dbReference>
<dbReference type="ProteomicsDB" id="50899">
    <molecule id="O95466-2"/>
</dbReference>
<dbReference type="ProteomicsDB" id="50900">
    <molecule id="O95466-3"/>
</dbReference>
<dbReference type="Pumba" id="O95466"/>
<dbReference type="Antibodypedia" id="17595">
    <property type="antibodies" value="177 antibodies from 32 providers"/>
</dbReference>
<dbReference type="DNASU" id="752"/>
<dbReference type="Ensembl" id="ENST00000331495.8">
    <molecule id="O95466-1"/>
    <property type="protein sequence ID" value="ENSP00000329219.2"/>
    <property type="gene ID" value="ENSG00000184922.15"/>
</dbReference>
<dbReference type="Ensembl" id="ENST00000587489.6">
    <molecule id="O95466-2"/>
    <property type="protein sequence ID" value="ENSP00000465474.2"/>
    <property type="gene ID" value="ENSG00000184922.15"/>
</dbReference>
<dbReference type="GeneID" id="752"/>
<dbReference type="KEGG" id="hsa:752"/>
<dbReference type="MANE-Select" id="ENST00000331495.8">
    <property type="protein sequence ID" value="ENSP00000329219.2"/>
    <property type="RefSeq nucleotide sequence ID" value="NM_005892.4"/>
    <property type="RefSeq protein sequence ID" value="NP_005883.3"/>
</dbReference>
<dbReference type="UCSC" id="uc002iin.4">
    <molecule id="O95466-1"/>
    <property type="organism name" value="human"/>
</dbReference>
<dbReference type="AGR" id="HGNC:1212"/>
<dbReference type="CTD" id="752"/>
<dbReference type="DisGeNET" id="752"/>
<dbReference type="GeneCards" id="FMNL1"/>
<dbReference type="HGNC" id="HGNC:1212">
    <property type="gene designation" value="FMNL1"/>
</dbReference>
<dbReference type="HPA" id="ENSG00000184922">
    <property type="expression patterns" value="Tissue enhanced (bone marrow, lymphoid tissue)"/>
</dbReference>
<dbReference type="MIM" id="604656">
    <property type="type" value="gene"/>
</dbReference>
<dbReference type="neXtProt" id="NX_O95466"/>
<dbReference type="OpenTargets" id="ENSG00000184922"/>
<dbReference type="PharmGKB" id="PA28186"/>
<dbReference type="VEuPathDB" id="HostDB:ENSG00000184922"/>
<dbReference type="eggNOG" id="KOG1922">
    <property type="taxonomic scope" value="Eukaryota"/>
</dbReference>
<dbReference type="eggNOG" id="KOG1923">
    <property type="taxonomic scope" value="Eukaryota"/>
</dbReference>
<dbReference type="GeneTree" id="ENSGT00940000156292"/>
<dbReference type="HOGENOM" id="CLU_003597_0_0_1"/>
<dbReference type="InParanoid" id="O95466"/>
<dbReference type="OMA" id="ANNCAIM"/>
<dbReference type="OrthoDB" id="1104827at2759"/>
<dbReference type="PAN-GO" id="O95466">
    <property type="GO annotations" value="5 GO annotations based on evolutionary models"/>
</dbReference>
<dbReference type="PhylomeDB" id="O95466"/>
<dbReference type="TreeFam" id="TF325155"/>
<dbReference type="PathwayCommons" id="O95466"/>
<dbReference type="Reactome" id="R-HSA-5663220">
    <property type="pathway name" value="RHO GTPases Activate Formins"/>
</dbReference>
<dbReference type="Reactome" id="R-HSA-9013148">
    <property type="pathway name" value="CDC42 GTPase cycle"/>
</dbReference>
<dbReference type="Reactome" id="R-HSA-9013149">
    <property type="pathway name" value="RAC1 GTPase cycle"/>
</dbReference>
<dbReference type="SignaLink" id="O95466"/>
<dbReference type="BioGRID-ORCS" id="752">
    <property type="hits" value="21 hits in 1159 CRISPR screens"/>
</dbReference>
<dbReference type="CD-CODE" id="FB4E32DD">
    <property type="entry name" value="Presynaptic clusters and postsynaptic densities"/>
</dbReference>
<dbReference type="ChiTaRS" id="FMNL1">
    <property type="organism name" value="human"/>
</dbReference>
<dbReference type="EvolutionaryTrace" id="O95466"/>
<dbReference type="GeneWiki" id="FMNL1"/>
<dbReference type="GenomeRNAi" id="752"/>
<dbReference type="Pharos" id="O95466">
    <property type="development level" value="Tbio"/>
</dbReference>
<dbReference type="PRO" id="PR:O95466"/>
<dbReference type="Proteomes" id="UP000005640">
    <property type="component" value="Chromosome 17"/>
</dbReference>
<dbReference type="RNAct" id="O95466">
    <property type="molecule type" value="protein"/>
</dbReference>
<dbReference type="Bgee" id="ENSG00000184922">
    <property type="expression patterns" value="Expressed in granulocyte and 163 other cell types or tissues"/>
</dbReference>
<dbReference type="ExpressionAtlas" id="O95466">
    <property type="expression patterns" value="baseline and differential"/>
</dbReference>
<dbReference type="GO" id="GO:0032059">
    <property type="term" value="C:bleb"/>
    <property type="evidence" value="ECO:0007669"/>
    <property type="project" value="UniProtKB-SubCell"/>
</dbReference>
<dbReference type="GO" id="GO:0005938">
    <property type="term" value="C:cell cortex"/>
    <property type="evidence" value="ECO:0007669"/>
    <property type="project" value="UniProtKB-SubCell"/>
</dbReference>
<dbReference type="GO" id="GO:0005829">
    <property type="term" value="C:cytosol"/>
    <property type="evidence" value="ECO:0000314"/>
    <property type="project" value="HPA"/>
</dbReference>
<dbReference type="GO" id="GO:0070062">
    <property type="term" value="C:extracellular exosome"/>
    <property type="evidence" value="ECO:0007005"/>
    <property type="project" value="UniProtKB"/>
</dbReference>
<dbReference type="GO" id="GO:0016020">
    <property type="term" value="C:membrane"/>
    <property type="evidence" value="ECO:0007005"/>
    <property type="project" value="UniProtKB"/>
</dbReference>
<dbReference type="GO" id="GO:0045335">
    <property type="term" value="C:phagocytic vesicle"/>
    <property type="evidence" value="ECO:0000250"/>
    <property type="project" value="UniProtKB"/>
</dbReference>
<dbReference type="GO" id="GO:0005886">
    <property type="term" value="C:plasma membrane"/>
    <property type="evidence" value="ECO:0000250"/>
    <property type="project" value="UniProtKB"/>
</dbReference>
<dbReference type="GO" id="GO:0051015">
    <property type="term" value="F:actin filament binding"/>
    <property type="evidence" value="ECO:0000250"/>
    <property type="project" value="UniProtKB"/>
</dbReference>
<dbReference type="GO" id="GO:0032794">
    <property type="term" value="F:GTPase activating protein binding"/>
    <property type="evidence" value="ECO:0000314"/>
    <property type="project" value="UniProtKB"/>
</dbReference>
<dbReference type="GO" id="GO:0031267">
    <property type="term" value="F:small GTPase binding"/>
    <property type="evidence" value="ECO:0000250"/>
    <property type="project" value="UniProtKB"/>
</dbReference>
<dbReference type="GO" id="GO:0051014">
    <property type="term" value="P:actin filament severing"/>
    <property type="evidence" value="ECO:0000250"/>
    <property type="project" value="UniProtKB"/>
</dbReference>
<dbReference type="GO" id="GO:0016477">
    <property type="term" value="P:cell migration"/>
    <property type="evidence" value="ECO:0000318"/>
    <property type="project" value="GO_Central"/>
</dbReference>
<dbReference type="GO" id="GO:0030866">
    <property type="term" value="P:cortical actin cytoskeleton organization"/>
    <property type="evidence" value="ECO:0000315"/>
    <property type="project" value="UniProtKB"/>
</dbReference>
<dbReference type="GO" id="GO:0008360">
    <property type="term" value="P:regulation of cell shape"/>
    <property type="evidence" value="ECO:0000315"/>
    <property type="project" value="UniProtKB"/>
</dbReference>
<dbReference type="FunFam" id="1.20.58.2220:FF:000001">
    <property type="entry name" value="Formin-like 1, isoform CRA_c"/>
    <property type="match status" value="1"/>
</dbReference>
<dbReference type="FunFam" id="1.25.10.10:FF:000036">
    <property type="entry name" value="Formin-like protein 3 isoform 1"/>
    <property type="match status" value="1"/>
</dbReference>
<dbReference type="FunFam" id="1.25.10.10:FF:000045">
    <property type="entry name" value="Formin-like protein 3 isoform 1"/>
    <property type="match status" value="1"/>
</dbReference>
<dbReference type="Gene3D" id="1.20.58.2220">
    <property type="entry name" value="Formin, FH2 domain"/>
    <property type="match status" value="1"/>
</dbReference>
<dbReference type="Gene3D" id="1.25.10.10">
    <property type="entry name" value="Leucine-rich Repeat Variant"/>
    <property type="match status" value="2"/>
</dbReference>
<dbReference type="InterPro" id="IPR011989">
    <property type="entry name" value="ARM-like"/>
</dbReference>
<dbReference type="InterPro" id="IPR016024">
    <property type="entry name" value="ARM-type_fold"/>
</dbReference>
<dbReference type="InterPro" id="IPR014767">
    <property type="entry name" value="DAD_dom"/>
</dbReference>
<dbReference type="InterPro" id="IPR015425">
    <property type="entry name" value="FH2_Formin"/>
</dbReference>
<dbReference type="InterPro" id="IPR042201">
    <property type="entry name" value="FH2_Formin_sf"/>
</dbReference>
<dbReference type="InterPro" id="IPR010472">
    <property type="entry name" value="FH3_dom"/>
</dbReference>
<dbReference type="InterPro" id="IPR043592">
    <property type="entry name" value="FMNL_animal"/>
</dbReference>
<dbReference type="InterPro" id="IPR014768">
    <property type="entry name" value="GBD/FH3_dom"/>
</dbReference>
<dbReference type="InterPro" id="IPR010473">
    <property type="entry name" value="GTPase-bd"/>
</dbReference>
<dbReference type="PANTHER" id="PTHR45857">
    <property type="entry name" value="FORMIN-LIKE PROTEIN"/>
    <property type="match status" value="1"/>
</dbReference>
<dbReference type="PANTHER" id="PTHR45857:SF2">
    <property type="entry name" value="FORMIN-LIKE PROTEIN 1"/>
    <property type="match status" value="1"/>
</dbReference>
<dbReference type="Pfam" id="PF06367">
    <property type="entry name" value="Drf_FH3"/>
    <property type="match status" value="1"/>
</dbReference>
<dbReference type="Pfam" id="PF06371">
    <property type="entry name" value="Drf_GBD"/>
    <property type="match status" value="2"/>
</dbReference>
<dbReference type="Pfam" id="PF02181">
    <property type="entry name" value="FH2"/>
    <property type="match status" value="1"/>
</dbReference>
<dbReference type="PRINTS" id="PR01217">
    <property type="entry name" value="PRICHEXTENSN"/>
</dbReference>
<dbReference type="SMART" id="SM01139">
    <property type="entry name" value="Drf_FH3"/>
    <property type="match status" value="1"/>
</dbReference>
<dbReference type="SMART" id="SM01140">
    <property type="entry name" value="Drf_GBD"/>
    <property type="match status" value="1"/>
</dbReference>
<dbReference type="SMART" id="SM00498">
    <property type="entry name" value="FH2"/>
    <property type="match status" value="1"/>
</dbReference>
<dbReference type="SUPFAM" id="SSF48371">
    <property type="entry name" value="ARM repeat"/>
    <property type="match status" value="1"/>
</dbReference>
<dbReference type="SUPFAM" id="SSF101447">
    <property type="entry name" value="Formin homology 2 domain (FH2 domain)"/>
    <property type="match status" value="1"/>
</dbReference>
<dbReference type="PROSITE" id="PS51231">
    <property type="entry name" value="DAD"/>
    <property type="match status" value="1"/>
</dbReference>
<dbReference type="PROSITE" id="PS51444">
    <property type="entry name" value="FH2"/>
    <property type="match status" value="1"/>
</dbReference>
<dbReference type="PROSITE" id="PS51232">
    <property type="entry name" value="GBD_FH3"/>
    <property type="match status" value="1"/>
</dbReference>
<comment type="function">
    <text evidence="1 8">May play a role in the control of cell motility and survival of macrophages (By similarity). Plays a role in the regulation of cell morphology and cytoskeletal organization. Required in the cortical actin filament dynamics and cell shape.</text>
</comment>
<comment type="subunit">
    <text evidence="1 7">Interacts with RAC1, PFN1 and PFN2 (By similarity). Interacts (activated by RAC1) with SRGAP2 (via SH3 domain); regulates the actin filament severing activity of FMNL1.</text>
</comment>
<comment type="interaction">
    <interactant intactId="EBI-720020">
        <id>O95466</id>
    </interactant>
    <interactant intactId="EBI-1051034">
        <id>O75044</id>
        <label>SRGAP2</label>
    </interactant>
    <organismsDiffer>false</organismsDiffer>
    <experiments>3</experiments>
</comment>
<comment type="interaction">
    <interactant intactId="EBI-720020">
        <id>O95466</id>
    </interactant>
    <interactant intactId="EBI-27033646">
        <id>D0ZIB5</id>
        <label>steC</label>
    </interactant>
    <organismsDiffer>true</organismsDiffer>
    <experiments>6</experiments>
</comment>
<comment type="interaction">
    <interactant intactId="EBI-10191924">
        <id>O95466-2</id>
    </interactant>
    <interactant intactId="EBI-740641">
        <id>Q9NP66</id>
        <label>HMG20A</label>
    </interactant>
    <organismsDiffer>false</organismsDiffer>
    <experiments>3</experiments>
</comment>
<comment type="subcellular location">
    <subcellularLocation>
        <location evidence="1">Cytoplasm</location>
    </subcellularLocation>
    <subcellularLocation>
        <location evidence="6">Cell membrane</location>
        <topology evidence="6">Lipid-anchor</topology>
    </subcellularLocation>
    <subcellularLocation>
        <location evidence="1">Cytoplasmic vesicle</location>
        <location evidence="1">Phagosome</location>
    </subcellularLocation>
    <text evidence="1">Recruited to actin-rich phagosomes during phagocytosis. Translocates to the plasma membrane upon activation by RAC1 (By similarity).</text>
</comment>
<comment type="subcellular location">
    <molecule>Isoform 3</molecule>
    <subcellularLocation>
        <location>Cytoplasm</location>
        <location>Cell cortex</location>
    </subcellularLocation>
    <subcellularLocation>
        <location>Cell projection</location>
        <location>Bleb</location>
    </subcellularLocation>
    <text>Colocalized with F-actin in bleb protrusions.</text>
</comment>
<comment type="alternative products">
    <event type="alternative splicing"/>
    <isoform>
        <id>O95466-1</id>
        <name>1</name>
        <name>FMNL1alpha</name>
        <sequence type="displayed"/>
    </isoform>
    <isoform>
        <id>O95466-2</id>
        <name>2</name>
        <name>FMNL1beta</name>
        <sequence type="described" ref="VSP_013977"/>
    </isoform>
    <isoform>
        <id>O95466-3</id>
        <name>3</name>
        <name>FMNL1gamma</name>
        <sequence type="described" ref="VSP_043845"/>
    </isoform>
</comment>
<comment type="tissue specificity">
    <text>Expressed in heart, brain, placenta, lung, liver, skeletal muscle, kidney and pancreas.</text>
</comment>
<comment type="domain">
    <text evidence="1">The DAD domain regulates activation via by an autoinhibitory interaction with the N-terminus. This autoinhibition is released upon competitive binding of an activated GTPase. The release of DAD allows the FH2 domain to then nucleate and elongate nonbranched actin filaments (By similarity).</text>
</comment>
<comment type="PTM">
    <text evidence="6">Myristoylation mediates membrane localization and blebbing.</text>
</comment>
<comment type="miscellaneous">
    <molecule>Isoform 3</molecule>
    <text evidence="14">Due to intron retention. Constitutively activated form, probably due to alterations in the DAD domain.</text>
</comment>
<comment type="similarity">
    <text evidence="14">Belongs to the formin homology family.</text>
</comment>
<comment type="sequence caution" evidence="14">
    <conflict type="erroneous initiation">
        <sequence resource="EMBL-CDS" id="AAH21906"/>
    </conflict>
</comment>
<comment type="sequence caution" evidence="14">
    <conflict type="erroneous initiation">
        <sequence resource="EMBL-CDS" id="CAA07870"/>
    </conflict>
</comment>
<evidence type="ECO:0000250" key="1"/>
<evidence type="ECO:0000255" key="2">
    <source>
        <dbReference type="PROSITE-ProRule" id="PRU00577"/>
    </source>
</evidence>
<evidence type="ECO:0000255" key="3">
    <source>
        <dbReference type="PROSITE-ProRule" id="PRU00579"/>
    </source>
</evidence>
<evidence type="ECO:0000255" key="4">
    <source>
        <dbReference type="PROSITE-ProRule" id="PRU00774"/>
    </source>
</evidence>
<evidence type="ECO:0000256" key="5">
    <source>
        <dbReference type="SAM" id="MobiDB-lite"/>
    </source>
</evidence>
<evidence type="ECO:0000269" key="6">
    <source>
    </source>
</evidence>
<evidence type="ECO:0000269" key="7">
    <source>
    </source>
</evidence>
<evidence type="ECO:0000269" key="8">
    <source>
    </source>
</evidence>
<evidence type="ECO:0000269" key="9">
    <source>
    </source>
</evidence>
<evidence type="ECO:0000303" key="10">
    <source>
    </source>
</evidence>
<evidence type="ECO:0000303" key="11">
    <source>
    </source>
</evidence>
<evidence type="ECO:0000303" key="12">
    <source>
    </source>
</evidence>
<evidence type="ECO:0000303" key="13">
    <source ref="6"/>
</evidence>
<evidence type="ECO:0000305" key="14"/>
<evidence type="ECO:0007744" key="15">
    <source>
    </source>
</evidence>
<evidence type="ECO:0007744" key="16">
    <source>
    </source>
</evidence>
<evidence type="ECO:0007744" key="17">
    <source>
    </source>
</evidence>
<evidence type="ECO:0007744" key="18">
    <source>
    </source>
</evidence>
<evidence type="ECO:0007744" key="19">
    <source>
    </source>
</evidence>
<evidence type="ECO:0007744" key="20">
    <source>
    </source>
</evidence>
<reference key="1">
    <citation type="submission" date="2003-04" db="EMBL/GenBank/DDBJ databases">
        <title>Human leukocyte formin: a new protein preferentially expressed in lymphocytes.</title>
        <authorList>
            <person name="Favaro P.M.B."/>
            <person name="Medina S.S."/>
            <person name="Basseres D.S."/>
            <person name="Costa F.F."/>
            <person name="Saad S.T.O."/>
        </authorList>
    </citation>
    <scope>NUCLEOTIDE SEQUENCE [MRNA] (ISOFORM 1)</scope>
    <source>
        <tissue>Bone marrow</tissue>
    </source>
</reference>
<reference key="2">
    <citation type="journal article" date="2006" name="Nature">
        <title>DNA sequence of human chromosome 17 and analysis of rearrangement in the human lineage.</title>
        <authorList>
            <person name="Zody M.C."/>
            <person name="Garber M."/>
            <person name="Adams D.J."/>
            <person name="Sharpe T."/>
            <person name="Harrow J."/>
            <person name="Lupski J.R."/>
            <person name="Nicholson C."/>
            <person name="Searle S.M."/>
            <person name="Wilming L."/>
            <person name="Young S.K."/>
            <person name="Abouelleil A."/>
            <person name="Allen N.R."/>
            <person name="Bi W."/>
            <person name="Bloom T."/>
            <person name="Borowsky M.L."/>
            <person name="Bugalter B.E."/>
            <person name="Butler J."/>
            <person name="Chang J.L."/>
            <person name="Chen C.-K."/>
            <person name="Cook A."/>
            <person name="Corum B."/>
            <person name="Cuomo C.A."/>
            <person name="de Jong P.J."/>
            <person name="DeCaprio D."/>
            <person name="Dewar K."/>
            <person name="FitzGerald M."/>
            <person name="Gilbert J."/>
            <person name="Gibson R."/>
            <person name="Gnerre S."/>
            <person name="Goldstein S."/>
            <person name="Grafham D.V."/>
            <person name="Grocock R."/>
            <person name="Hafez N."/>
            <person name="Hagopian D.S."/>
            <person name="Hart E."/>
            <person name="Norman C.H."/>
            <person name="Humphray S."/>
            <person name="Jaffe D.B."/>
            <person name="Jones M."/>
            <person name="Kamal M."/>
            <person name="Khodiyar V.K."/>
            <person name="LaButti K."/>
            <person name="Laird G."/>
            <person name="Lehoczky J."/>
            <person name="Liu X."/>
            <person name="Lokyitsang T."/>
            <person name="Loveland J."/>
            <person name="Lui A."/>
            <person name="Macdonald P."/>
            <person name="Major J.E."/>
            <person name="Matthews L."/>
            <person name="Mauceli E."/>
            <person name="McCarroll S.A."/>
            <person name="Mihalev A.H."/>
            <person name="Mudge J."/>
            <person name="Nguyen C."/>
            <person name="Nicol R."/>
            <person name="O'Leary S.B."/>
            <person name="Osoegawa K."/>
            <person name="Schwartz D.C."/>
            <person name="Shaw-Smith C."/>
            <person name="Stankiewicz P."/>
            <person name="Steward C."/>
            <person name="Swarbreck D."/>
            <person name="Venkataraman V."/>
            <person name="Whittaker C.A."/>
            <person name="Yang X."/>
            <person name="Zimmer A.R."/>
            <person name="Bradley A."/>
            <person name="Hubbard T."/>
            <person name="Birren B.W."/>
            <person name="Rogers J."/>
            <person name="Lander E.S."/>
            <person name="Nusbaum C."/>
        </authorList>
    </citation>
    <scope>NUCLEOTIDE SEQUENCE [LARGE SCALE GENOMIC DNA]</scope>
</reference>
<reference key="3">
    <citation type="submission" date="2001-10" db="EMBL/GenBank/DDBJ databases">
        <title>Identification of novel tumor antigens in CLL by SEREX: assessment of their potential as targets for immunotherapeutic approaches.</title>
        <authorList>
            <person name="Krackhardt A.M."/>
            <person name="Witzens M."/>
            <person name="Harig S."/>
            <person name="Hodi F.S."/>
            <person name="Zauls A.J."/>
            <person name="Chessia M."/>
            <person name="Barrett P."/>
            <person name="Gribben J.G."/>
        </authorList>
    </citation>
    <scope>NUCLEOTIDE SEQUENCE [MRNA] OF 110-1100 (ISOFORM 1)</scope>
</reference>
<reference key="4">
    <citation type="journal article" date="2004" name="Genome Res.">
        <title>The status, quality, and expansion of the NIH full-length cDNA project: the Mammalian Gene Collection (MGC).</title>
        <authorList>
            <consortium name="The MGC Project Team"/>
        </authorList>
    </citation>
    <scope>NUCLEOTIDE SEQUENCE [LARGE SCALE MRNA] OF 419-1100 (ISOFORMS 1 AND 2)</scope>
    <source>
        <tissue>Brain</tissue>
        <tissue>Lymph</tissue>
    </source>
</reference>
<reference key="5">
    <citation type="journal article" date="1998" name="Hum. Genet.">
        <title>The NIK protein kinase and C17orf1 genes: chromosomal mapping, gene structures and mutational screening in frontotemporal dementia and parkinsonism linked to chromosome 17.</title>
        <authorList>
            <person name="Aronsson F.C."/>
            <person name="Magnusson P."/>
            <person name="Andersson B."/>
            <person name="Karsten S.L."/>
            <person name="Shibasaki Y."/>
            <person name="Lendon C.L."/>
            <person name="Goate A.M."/>
            <person name="Brookes A.J."/>
        </authorList>
    </citation>
    <scope>NUCLEOTIDE SEQUENCE [MRNA] OF 629-1100 (ISOFORM 2)</scope>
</reference>
<reference key="6">
    <citation type="submission" date="2004-06" db="EMBL/GenBank/DDBJ databases">
        <title>Cloning of human full open reading frames in Gateway(TM) system entry vector (pDONR201).</title>
        <authorList>
            <person name="Ebert L."/>
            <person name="Schick M."/>
            <person name="Neubert P."/>
            <person name="Schatten R."/>
            <person name="Henze S."/>
            <person name="Korn B."/>
        </authorList>
    </citation>
    <scope>NUCLEOTIDE SEQUENCE [LARGE SCALE MRNA] OF 642-1100 (ISOFORM 2)</scope>
</reference>
<reference key="7">
    <citation type="journal article" date="2009" name="J. Biol. Chem.">
        <title>Formin-like 1 (FMNL1) is regulated by N-terminal myristoylation and induces polarized membrane blebbing.</title>
        <authorList>
            <person name="Han Y."/>
            <person name="Eppinger E."/>
            <person name="Schuster I.G."/>
            <person name="Weigand L.U."/>
            <person name="Liang X."/>
            <person name="Kremmer E."/>
            <person name="Peschel C."/>
            <person name="Krackhardt A.M."/>
        </authorList>
    </citation>
    <scope>NUCLEOTIDE SEQUENCE [MRNA] OF 668-1100 (ISOFORM 3)</scope>
    <scope>MYRISTOYLATION AT GLY-2</scope>
    <scope>SUBCELLULAR LOCATION</scope>
    <scope>ALTERNATIVE SPLICING</scope>
</reference>
<reference key="8">
    <citation type="journal article" date="2006" name="Cell">
        <title>Global, in vivo, and site-specific phosphorylation dynamics in signaling networks.</title>
        <authorList>
            <person name="Olsen J.V."/>
            <person name="Blagoev B."/>
            <person name="Gnad F."/>
            <person name="Macek B."/>
            <person name="Kumar C."/>
            <person name="Mortensen P."/>
            <person name="Mann M."/>
        </authorList>
    </citation>
    <scope>PHOSPHORYLATION [LARGE SCALE ANALYSIS] AT SER-624</scope>
    <scope>IDENTIFICATION BY MASS SPECTROMETRY [LARGE SCALE ANALYSIS]</scope>
    <source>
        <tissue>Cervix carcinoma</tissue>
    </source>
</reference>
<reference key="9">
    <citation type="journal article" date="2008" name="J. Proteome Res.">
        <title>Phosphorylation analysis of primary human T lymphocytes using sequential IMAC and titanium oxide enrichment.</title>
        <authorList>
            <person name="Carrascal M."/>
            <person name="Ovelleiro D."/>
            <person name="Casas V."/>
            <person name="Gay M."/>
            <person name="Abian J."/>
        </authorList>
    </citation>
    <scope>PHOSPHORYLATION [LARGE SCALE ANALYSIS] AT SER-184 AND SER-624</scope>
    <scope>IDENTIFICATION BY MASS SPECTROMETRY [LARGE SCALE ANALYSIS]</scope>
    <source>
        <tissue>T-cell</tissue>
    </source>
</reference>
<reference key="10">
    <citation type="journal article" date="2008" name="Proc. Natl. Acad. Sci. U.S.A.">
        <title>A quantitative atlas of mitotic phosphorylation.</title>
        <authorList>
            <person name="Dephoure N."/>
            <person name="Zhou C."/>
            <person name="Villen J."/>
            <person name="Beausoleil S.A."/>
            <person name="Bakalarski C.E."/>
            <person name="Elledge S.J."/>
            <person name="Gygi S.P."/>
        </authorList>
    </citation>
    <scope>IDENTIFICATION BY MASS SPECTROMETRY [LARGE SCALE ANALYSIS]</scope>
    <source>
        <tissue>Cervix carcinoma</tissue>
    </source>
</reference>
<reference key="11">
    <citation type="journal article" date="2009" name="Sci. Signal.">
        <title>Quantitative phosphoproteomic analysis of T cell receptor signaling reveals system-wide modulation of protein-protein interactions.</title>
        <authorList>
            <person name="Mayya V."/>
            <person name="Lundgren D.H."/>
            <person name="Hwang S.-I."/>
            <person name="Rezaul K."/>
            <person name="Wu L."/>
            <person name="Eng J.K."/>
            <person name="Rodionov V."/>
            <person name="Han D.K."/>
        </authorList>
    </citation>
    <scope>PHOSPHORYLATION [LARGE SCALE ANALYSIS] AT SER-7; SER-184 AND SER-624</scope>
    <scope>IDENTIFICATION BY MASS SPECTROMETRY [LARGE SCALE ANALYSIS]</scope>
    <source>
        <tissue>Leukemic T-cell</tissue>
    </source>
</reference>
<reference key="12">
    <citation type="journal article" date="2010" name="Sci. Signal.">
        <title>Quantitative phosphoproteomics reveals widespread full phosphorylation site occupancy during mitosis.</title>
        <authorList>
            <person name="Olsen J.V."/>
            <person name="Vermeulen M."/>
            <person name="Santamaria A."/>
            <person name="Kumar C."/>
            <person name="Miller M.L."/>
            <person name="Jensen L.J."/>
            <person name="Gnad F."/>
            <person name="Cox J."/>
            <person name="Jensen T.S."/>
            <person name="Nigg E.A."/>
            <person name="Brunak S."/>
            <person name="Mann M."/>
        </authorList>
    </citation>
    <scope>PHOSPHORYLATION [LARGE SCALE ANALYSIS] AT SER-184 AND SER-624</scope>
    <scope>IDENTIFICATION BY MASS SPECTROMETRY [LARGE SCALE ANALYSIS]</scope>
    <source>
        <tissue>Cervix carcinoma</tissue>
    </source>
</reference>
<reference key="13">
    <citation type="journal article" date="2011" name="BMC Biol.">
        <title>Identification and characterization of a set of conserved and new regulators of cytoskeletal organisation, cell morphology and migration.</title>
        <authorList>
            <person name="Bai S.W."/>
            <person name="Herrera-Abreu M.T."/>
            <person name="Rohn J.L."/>
            <person name="Racine V."/>
            <person name="Tajadura V."/>
            <person name="Suryavanshi N."/>
            <person name="Bechtel S."/>
            <person name="Wiemann S."/>
            <person name="Baum B."/>
            <person name="Ridley A.J."/>
        </authorList>
    </citation>
    <scope>FUNCTION</scope>
</reference>
<reference key="14">
    <citation type="journal article" date="2011" name="BMC Syst. Biol.">
        <title>Initial characterization of the human central proteome.</title>
        <authorList>
            <person name="Burkard T.R."/>
            <person name="Planyavsky M."/>
            <person name="Kaupe I."/>
            <person name="Breitwieser F.P."/>
            <person name="Buerckstuemmer T."/>
            <person name="Bennett K.L."/>
            <person name="Superti-Furga G."/>
            <person name="Colinge J."/>
        </authorList>
    </citation>
    <scope>IDENTIFICATION BY MASS SPECTROMETRY [LARGE SCALE ANALYSIS]</scope>
</reference>
<reference key="15">
    <citation type="journal article" date="2011" name="J. Biol. Chem.">
        <title>Bi-modal regulation of a formin by srGAP2.</title>
        <authorList>
            <person name="Mason F.M."/>
            <person name="Heimsath E.G."/>
            <person name="Higgs H.N."/>
            <person name="Soderling S.H."/>
        </authorList>
    </citation>
    <scope>INTERACTION WITH SRGAP2</scope>
</reference>
<reference key="16">
    <citation type="journal article" date="2013" name="J. Proteome Res.">
        <title>Toward a comprehensive characterization of a human cancer cell phosphoproteome.</title>
        <authorList>
            <person name="Zhou H."/>
            <person name="Di Palma S."/>
            <person name="Preisinger C."/>
            <person name="Peng M."/>
            <person name="Polat A.N."/>
            <person name="Heck A.J."/>
            <person name="Mohammed S."/>
        </authorList>
    </citation>
    <scope>PHOSPHORYLATION [LARGE SCALE ANALYSIS] AT SER-184; SER-624; SER-693 AND SER-1031</scope>
    <scope>IDENTIFICATION BY MASS SPECTROMETRY [LARGE SCALE ANALYSIS]</scope>
    <source>
        <tissue>Cervix carcinoma</tissue>
        <tissue>Erythroleukemia</tissue>
    </source>
</reference>
<reference key="17">
    <citation type="journal article" date="2014" name="J. Proteomics">
        <title>An enzyme assisted RP-RPLC approach for in-depth analysis of human liver phosphoproteome.</title>
        <authorList>
            <person name="Bian Y."/>
            <person name="Song C."/>
            <person name="Cheng K."/>
            <person name="Dong M."/>
            <person name="Wang F."/>
            <person name="Huang J."/>
            <person name="Sun D."/>
            <person name="Wang L."/>
            <person name="Ye M."/>
            <person name="Zou H."/>
        </authorList>
    </citation>
    <scope>PHOSPHORYLATION [LARGE SCALE ANALYSIS] AT SER-624 AND SER-1031</scope>
    <scope>IDENTIFICATION BY MASS SPECTROMETRY [LARGE SCALE ANALYSIS]</scope>
    <source>
        <tissue>Liver</tissue>
    </source>
</reference>
<reference key="18">
    <citation type="journal article" date="2014" name="Nat. Commun.">
        <title>Global profiling of co- and post-translationally N-myristoylated proteomes in human cells.</title>
        <authorList>
            <person name="Thinon E."/>
            <person name="Serwa R.A."/>
            <person name="Broncel M."/>
            <person name="Brannigan J.A."/>
            <person name="Brassat U."/>
            <person name="Wright M.H."/>
            <person name="Heal W.P."/>
            <person name="Wilkinson A.J."/>
            <person name="Mann D.J."/>
            <person name="Tate E.W."/>
        </authorList>
    </citation>
    <scope>MYRISTOYLATION AT GLY-2</scope>
    <scope>CLEAVAGE OF INITIATOR METHIONINE</scope>
    <scope>IDENTIFICATION BY MASS SPECTROMETRY</scope>
</reference>
<reference key="19">
    <citation type="journal article" date="2015" name="Proteomics">
        <title>N-terminome analysis of the human mitochondrial proteome.</title>
        <authorList>
            <person name="Vaca Jacome A.S."/>
            <person name="Rabilloud T."/>
            <person name="Schaeffer-Reiss C."/>
            <person name="Rompais M."/>
            <person name="Ayoub D."/>
            <person name="Lane L."/>
            <person name="Bairoch A."/>
            <person name="Van Dorsselaer A."/>
            <person name="Carapito C."/>
        </authorList>
    </citation>
    <scope>IDENTIFICATION BY MASS SPECTROMETRY [LARGE SCALE ANALYSIS]</scope>
</reference>
<organism>
    <name type="scientific">Homo sapiens</name>
    <name type="common">Human</name>
    <dbReference type="NCBI Taxonomy" id="9606"/>
    <lineage>
        <taxon>Eukaryota</taxon>
        <taxon>Metazoa</taxon>
        <taxon>Chordata</taxon>
        <taxon>Craniata</taxon>
        <taxon>Vertebrata</taxon>
        <taxon>Euteleostomi</taxon>
        <taxon>Mammalia</taxon>
        <taxon>Eutheria</taxon>
        <taxon>Euarchontoglires</taxon>
        <taxon>Primates</taxon>
        <taxon>Haplorrhini</taxon>
        <taxon>Catarrhini</taxon>
        <taxon>Hominidae</taxon>
        <taxon>Homo</taxon>
    </lineage>
</organism>
<feature type="initiator methionine" description="Removed" evidence="9">
    <location>
        <position position="1"/>
    </location>
</feature>
<feature type="chain" id="PRO_0000194890" description="Formin-like protein 1">
    <location>
        <begin position="2"/>
        <end position="1100"/>
    </location>
</feature>
<feature type="domain" description="GBD/FH3" evidence="3">
    <location>
        <begin position="27"/>
        <end position="468"/>
    </location>
</feature>
<feature type="domain" description="FH2" evidence="4">
    <location>
        <begin position="632"/>
        <end position="1023"/>
    </location>
</feature>
<feature type="domain" description="DAD" evidence="2">
    <location>
        <begin position="1059"/>
        <end position="1090"/>
    </location>
</feature>
<feature type="region of interest" description="Disordered" evidence="5">
    <location>
        <begin position="1"/>
        <end position="31"/>
    </location>
</feature>
<feature type="region of interest" description="Disordered" evidence="5">
    <location>
        <begin position="167"/>
        <end position="200"/>
    </location>
</feature>
<feature type="region of interest" description="Disordered" evidence="5">
    <location>
        <begin position="446"/>
        <end position="474"/>
    </location>
</feature>
<feature type="region of interest" description="Disordered" evidence="5">
    <location>
        <begin position="510"/>
        <end position="635"/>
    </location>
</feature>
<feature type="region of interest" description="Disordered" evidence="5">
    <location>
        <begin position="1008"/>
        <end position="1037"/>
    </location>
</feature>
<feature type="compositionally biased region" description="Low complexity" evidence="5">
    <location>
        <begin position="1"/>
        <end position="13"/>
    </location>
</feature>
<feature type="compositionally biased region" description="Pro residues" evidence="5">
    <location>
        <begin position="14"/>
        <end position="28"/>
    </location>
</feature>
<feature type="compositionally biased region" description="Low complexity" evidence="5">
    <location>
        <begin position="517"/>
        <end position="538"/>
    </location>
</feature>
<feature type="compositionally biased region" description="Pro residues" evidence="5">
    <location>
        <begin position="539"/>
        <end position="615"/>
    </location>
</feature>
<feature type="compositionally biased region" description="Low complexity" evidence="5">
    <location>
        <begin position="1013"/>
        <end position="1023"/>
    </location>
</feature>
<feature type="modified residue" description="Phosphoserine" evidence="17">
    <location>
        <position position="7"/>
    </location>
</feature>
<feature type="modified residue" description="Phosphoserine" evidence="16 17 18 19">
    <location>
        <position position="184"/>
    </location>
</feature>
<feature type="modified residue" description="Phosphoserine" evidence="15 16 17 18 19 20">
    <location>
        <position position="624"/>
    </location>
</feature>
<feature type="modified residue" description="Phosphoserine" evidence="19">
    <location>
        <position position="693"/>
    </location>
</feature>
<feature type="modified residue" description="Phosphoserine" evidence="19 20">
    <location>
        <position position="1031"/>
    </location>
</feature>
<feature type="lipid moiety-binding region" description="N-myristoyl glycine" evidence="6 9">
    <location>
        <position position="2"/>
    </location>
</feature>
<feature type="splice variant" id="VSP_043845" description="In isoform 3." evidence="11">
    <original>T</original>
    <variation>TGKGLARPWSYPQSVLLCFLLTQCAILWGTGCHTASCYLFCFSFLFPFSTPLHLPHPHS</variation>
    <location>
        <position position="1070"/>
    </location>
</feature>
<feature type="splice variant" id="VSP_013977" description="In isoform 2." evidence="10 12 13">
    <original>VIKTVPFTARTGKRTSRLLCEASLGEEMPL</original>
    <variation>DLRNQPYIRADTGRRSARRRPPGPPLQVTSDLSL</variation>
    <location>
        <begin position="1071"/>
        <end position="1100"/>
    </location>
</feature>
<feature type="sequence conflict" description="In Ref. 1; AAP32476, 3; AAL99920 and 4; AAH73988." evidence="14" ref="1 3 4">
    <original>P</original>
    <variation>A</variation>
    <location>
        <position position="455"/>
    </location>
</feature>
<feature type="sequence conflict" description="In Ref. 4; AAH21906." evidence="14" ref="4">
    <location>
        <position position="602"/>
    </location>
</feature>
<feature type="sequence conflict" description="In Ref. 5; CAA07870." evidence="14" ref="5">
    <original>G</original>
    <variation>R</variation>
    <location>
        <position position="629"/>
    </location>
</feature>
<feature type="sequence conflict" description="In Ref. 4; AAH21906." evidence="14" ref="4">
    <original>DL</original>
    <variation>EV</variation>
    <location sequence="O95466-2">
        <begin position="1101"/>
        <end position="1102"/>
    </location>
</feature>
<gene>
    <name type="primary">FMNL1</name>
    <name type="synonym">C17orf1</name>
    <name type="synonym">C17orf1B</name>
    <name type="synonym">FMNL</name>
    <name type="synonym">FRL1</name>
</gene>
<keyword id="KW-0002">3D-structure</keyword>
<keyword id="KW-0025">Alternative splicing</keyword>
<keyword id="KW-1003">Cell membrane</keyword>
<keyword id="KW-0966">Cell projection</keyword>
<keyword id="KW-0963">Cytoplasm</keyword>
<keyword id="KW-0968">Cytoplasmic vesicle</keyword>
<keyword id="KW-0449">Lipoprotein</keyword>
<keyword id="KW-0472">Membrane</keyword>
<keyword id="KW-0519">Myristate</keyword>
<keyword id="KW-0597">Phosphoprotein</keyword>
<keyword id="KW-1267">Proteomics identification</keyword>
<keyword id="KW-1185">Reference proteome</keyword>
<name>FMNL1_HUMAN</name>
<accession>O95466</accession>
<accession>D2DGW2</accession>
<accession>Q6DKG5</accession>
<accession>Q6IBP3</accession>
<accession>Q86UH1</accession>
<accession>Q8N671</accession>
<accession>Q8TDH1</accession>
<accession>Q96H10</accession>
<sequence length="1100" mass="121854">MGNAAGSAEQPAGPAAPPPKQPAPPKQPMPAAGELEERFNRALNCMNLPPDKVQLLSQYDNEKKWELICDQERFQVKNPPAAYIQKLKSYVDTGGVSRKVAADWMSNLGFKRRVQESTQVLRELETSLRTNHIGWVQEFLNEENRGLDVLLEYLAFAQCSVTYDMESTDNGASNSEKNKPLEQSVEDLSKGPPSSVPKSRHLTIKLTPAHSRKALRNSRIVSQKDDVHVCIMCLRAIMNYQSGFSLVMNHPACVNEIALSLNNKNPRTKALVLELLAAVCLVRGGHDIILAAFDNFKEVCGEQHRFEKLMEYFRNEDSNIDFMVACMQFINIVVHSVENMNFRVFLQYEFTHLGLDLYLERLRLTESDKLQVQIQAYLDNIFDVGALLEDTETKNAVLEHMEELQEQVALLTERLRDAENESMAKIAELEKQLSQARKELETLRERFSESTAMGPSRRPPEPEKAPPAAPTRPSALELKVEELEEKGLIRILRGPGDAVSIEILPVAVATPSGGDAPTPGVPTGSPSPDLAPAAEPAPGAAPPPPPPLPGLPSPQEAPPSAPPQAPPLPGSPEPPPAPPLPGDLPPPPPPPPPPPGTDGPVPPPPPPPPPPPGGPPDALGRRDSELGPGVKAKKPIQTKFRMPLLNWVALKPSQITGTVFTELNDEKVLQELDMSDFEEQFKTKSQGPSLDLSALKSKAAQKAPSKATLIEANRAKNLAITLRKGNLGAERICQAIEAYDLQALGLDFLELLMRFLPTEYERSLITRFEREQRPMEELSEEDRFMLCFSRIPRLPERMTTLTFLGNFPDTAQLLMPQLNAIIAASMSIKSSDKLRQILEIVLAFGNYMNSSKRGAAYGFRLQSLDALLEMKSTDRKQTLLHYLVKVIAEKYPQLTGFHSDLHFLDKAGSVSLDSVLADVRSLQRGLELTQREFVRQDDCMVLKEFLRANSPTMDKLLADSKTAQEAFESVVEYFGENPKTTSPGLFFSLFSRFIKAYKKAEQEVEQWKKEAAAQEAGADTPGKGEPPAPKSPPKARRPQMDLISELKRRQQKEPLIYESDRDGAIEDIITVIKTVPFTARTGKRTSRLLCEASLGEEMPL</sequence>
<proteinExistence type="evidence at protein level"/>